<reference key="1">
    <citation type="journal article" date="2005" name="Proc. Natl. Acad. Sci. U.S.A.">
        <title>Complete genome sequence of Vibrio fischeri: a symbiotic bacterium with pathogenic congeners.</title>
        <authorList>
            <person name="Ruby E.G."/>
            <person name="Urbanowski M."/>
            <person name="Campbell J."/>
            <person name="Dunn A."/>
            <person name="Faini M."/>
            <person name="Gunsalus R."/>
            <person name="Lostroh P."/>
            <person name="Lupp C."/>
            <person name="McCann J."/>
            <person name="Millikan D."/>
            <person name="Schaefer A."/>
            <person name="Stabb E."/>
            <person name="Stevens A."/>
            <person name="Visick K."/>
            <person name="Whistler C."/>
            <person name="Greenberg E.P."/>
        </authorList>
    </citation>
    <scope>NUCLEOTIDE SEQUENCE [LARGE SCALE GENOMIC DNA]</scope>
    <source>
        <strain>ATCC 700601 / ES114</strain>
    </source>
</reference>
<name>SERC_ALIF1</name>
<dbReference type="EC" id="2.6.1.52" evidence="1"/>
<dbReference type="EMBL" id="CP000020">
    <property type="protein sequence ID" value="AAW85394.1"/>
    <property type="molecule type" value="Genomic_DNA"/>
</dbReference>
<dbReference type="RefSeq" id="WP_011261561.1">
    <property type="nucleotide sequence ID" value="NC_006840.2"/>
</dbReference>
<dbReference type="RefSeq" id="YP_204282.1">
    <property type="nucleotide sequence ID" value="NC_006840.2"/>
</dbReference>
<dbReference type="SMR" id="Q5E6F2"/>
<dbReference type="STRING" id="312309.VF_0899"/>
<dbReference type="EnsemblBacteria" id="AAW85394">
    <property type="protein sequence ID" value="AAW85394"/>
    <property type="gene ID" value="VF_0899"/>
</dbReference>
<dbReference type="GeneID" id="54163567"/>
<dbReference type="KEGG" id="vfi:VF_0899"/>
<dbReference type="PATRIC" id="fig|312309.11.peg.895"/>
<dbReference type="eggNOG" id="COG1932">
    <property type="taxonomic scope" value="Bacteria"/>
</dbReference>
<dbReference type="HOGENOM" id="CLU_034866_0_2_6"/>
<dbReference type="OrthoDB" id="9809412at2"/>
<dbReference type="UniPathway" id="UPA00135">
    <property type="reaction ID" value="UER00197"/>
</dbReference>
<dbReference type="UniPathway" id="UPA00244">
    <property type="reaction ID" value="UER00311"/>
</dbReference>
<dbReference type="Proteomes" id="UP000000537">
    <property type="component" value="Chromosome I"/>
</dbReference>
<dbReference type="GO" id="GO:0005737">
    <property type="term" value="C:cytoplasm"/>
    <property type="evidence" value="ECO:0007669"/>
    <property type="project" value="UniProtKB-SubCell"/>
</dbReference>
<dbReference type="GO" id="GO:0004648">
    <property type="term" value="F:O-phospho-L-serine:2-oxoglutarate aminotransferase activity"/>
    <property type="evidence" value="ECO:0007669"/>
    <property type="project" value="UniProtKB-UniRule"/>
</dbReference>
<dbReference type="GO" id="GO:0030170">
    <property type="term" value="F:pyridoxal phosphate binding"/>
    <property type="evidence" value="ECO:0007669"/>
    <property type="project" value="UniProtKB-UniRule"/>
</dbReference>
<dbReference type="GO" id="GO:0006564">
    <property type="term" value="P:L-serine biosynthetic process"/>
    <property type="evidence" value="ECO:0007669"/>
    <property type="project" value="UniProtKB-UniRule"/>
</dbReference>
<dbReference type="GO" id="GO:0008615">
    <property type="term" value="P:pyridoxine biosynthetic process"/>
    <property type="evidence" value="ECO:0007669"/>
    <property type="project" value="UniProtKB-UniRule"/>
</dbReference>
<dbReference type="CDD" id="cd00611">
    <property type="entry name" value="PSAT_like"/>
    <property type="match status" value="1"/>
</dbReference>
<dbReference type="FunFam" id="3.40.640.10:FF:000010">
    <property type="entry name" value="Phosphoserine aminotransferase"/>
    <property type="match status" value="1"/>
</dbReference>
<dbReference type="FunFam" id="3.90.1150.10:FF:000006">
    <property type="entry name" value="Phosphoserine aminotransferase"/>
    <property type="match status" value="1"/>
</dbReference>
<dbReference type="Gene3D" id="3.90.1150.10">
    <property type="entry name" value="Aspartate Aminotransferase, domain 1"/>
    <property type="match status" value="1"/>
</dbReference>
<dbReference type="Gene3D" id="3.40.640.10">
    <property type="entry name" value="Type I PLP-dependent aspartate aminotransferase-like (Major domain)"/>
    <property type="match status" value="1"/>
</dbReference>
<dbReference type="HAMAP" id="MF_00160">
    <property type="entry name" value="SerC_aminotrans_5"/>
    <property type="match status" value="1"/>
</dbReference>
<dbReference type="InterPro" id="IPR000192">
    <property type="entry name" value="Aminotrans_V_dom"/>
</dbReference>
<dbReference type="InterPro" id="IPR020578">
    <property type="entry name" value="Aminotrans_V_PyrdxlP_BS"/>
</dbReference>
<dbReference type="InterPro" id="IPR022278">
    <property type="entry name" value="Pser_aminoTfrase"/>
</dbReference>
<dbReference type="InterPro" id="IPR015424">
    <property type="entry name" value="PyrdxlP-dep_Trfase"/>
</dbReference>
<dbReference type="InterPro" id="IPR015421">
    <property type="entry name" value="PyrdxlP-dep_Trfase_major"/>
</dbReference>
<dbReference type="InterPro" id="IPR015422">
    <property type="entry name" value="PyrdxlP-dep_Trfase_small"/>
</dbReference>
<dbReference type="NCBIfam" id="NF003764">
    <property type="entry name" value="PRK05355.1"/>
    <property type="match status" value="1"/>
</dbReference>
<dbReference type="NCBIfam" id="TIGR01364">
    <property type="entry name" value="serC_1"/>
    <property type="match status" value="1"/>
</dbReference>
<dbReference type="PANTHER" id="PTHR43247">
    <property type="entry name" value="PHOSPHOSERINE AMINOTRANSFERASE"/>
    <property type="match status" value="1"/>
</dbReference>
<dbReference type="PANTHER" id="PTHR43247:SF1">
    <property type="entry name" value="PHOSPHOSERINE AMINOTRANSFERASE"/>
    <property type="match status" value="1"/>
</dbReference>
<dbReference type="Pfam" id="PF00266">
    <property type="entry name" value="Aminotran_5"/>
    <property type="match status" value="1"/>
</dbReference>
<dbReference type="PIRSF" id="PIRSF000525">
    <property type="entry name" value="SerC"/>
    <property type="match status" value="1"/>
</dbReference>
<dbReference type="SUPFAM" id="SSF53383">
    <property type="entry name" value="PLP-dependent transferases"/>
    <property type="match status" value="1"/>
</dbReference>
<dbReference type="PROSITE" id="PS00595">
    <property type="entry name" value="AA_TRANSFER_CLASS_5"/>
    <property type="match status" value="1"/>
</dbReference>
<accession>Q5E6F2</accession>
<comment type="function">
    <text evidence="1">Catalyzes the reversible conversion of 3-phosphohydroxypyruvate to phosphoserine and of 3-hydroxy-2-oxo-4-phosphonooxybutanoate to phosphohydroxythreonine.</text>
</comment>
<comment type="catalytic activity">
    <reaction evidence="1">
        <text>O-phospho-L-serine + 2-oxoglutarate = 3-phosphooxypyruvate + L-glutamate</text>
        <dbReference type="Rhea" id="RHEA:14329"/>
        <dbReference type="ChEBI" id="CHEBI:16810"/>
        <dbReference type="ChEBI" id="CHEBI:18110"/>
        <dbReference type="ChEBI" id="CHEBI:29985"/>
        <dbReference type="ChEBI" id="CHEBI:57524"/>
        <dbReference type="EC" id="2.6.1.52"/>
    </reaction>
</comment>
<comment type="catalytic activity">
    <reaction evidence="1">
        <text>4-(phosphooxy)-L-threonine + 2-oxoglutarate = (R)-3-hydroxy-2-oxo-4-phosphooxybutanoate + L-glutamate</text>
        <dbReference type="Rhea" id="RHEA:16573"/>
        <dbReference type="ChEBI" id="CHEBI:16810"/>
        <dbReference type="ChEBI" id="CHEBI:29985"/>
        <dbReference type="ChEBI" id="CHEBI:58452"/>
        <dbReference type="ChEBI" id="CHEBI:58538"/>
        <dbReference type="EC" id="2.6.1.52"/>
    </reaction>
</comment>
<comment type="cofactor">
    <cofactor evidence="1">
        <name>pyridoxal 5'-phosphate</name>
        <dbReference type="ChEBI" id="CHEBI:597326"/>
    </cofactor>
    <text evidence="1">Binds 1 pyridoxal phosphate per subunit.</text>
</comment>
<comment type="pathway">
    <text evidence="1">Amino-acid biosynthesis; L-serine biosynthesis; L-serine from 3-phospho-D-glycerate: step 2/3.</text>
</comment>
<comment type="pathway">
    <text evidence="1">Cofactor biosynthesis; pyridoxine 5'-phosphate biosynthesis; pyridoxine 5'-phosphate from D-erythrose 4-phosphate: step 3/5.</text>
</comment>
<comment type="subunit">
    <text evidence="1">Homodimer.</text>
</comment>
<comment type="subcellular location">
    <subcellularLocation>
        <location evidence="1">Cytoplasm</location>
    </subcellularLocation>
</comment>
<comment type="similarity">
    <text evidence="1">Belongs to the class-V pyridoxal-phosphate-dependent aminotransferase family. SerC subfamily.</text>
</comment>
<feature type="chain" id="PRO_0000150215" description="Phosphoserine aminotransferase">
    <location>
        <begin position="1"/>
        <end position="360"/>
    </location>
</feature>
<feature type="binding site" evidence="1">
    <location>
        <position position="42"/>
    </location>
    <ligand>
        <name>L-glutamate</name>
        <dbReference type="ChEBI" id="CHEBI:29985"/>
    </ligand>
</feature>
<feature type="binding site" evidence="1">
    <location>
        <begin position="76"/>
        <end position="77"/>
    </location>
    <ligand>
        <name>pyridoxal 5'-phosphate</name>
        <dbReference type="ChEBI" id="CHEBI:597326"/>
    </ligand>
</feature>
<feature type="binding site" evidence="1">
    <location>
        <position position="102"/>
    </location>
    <ligand>
        <name>pyridoxal 5'-phosphate</name>
        <dbReference type="ChEBI" id="CHEBI:597326"/>
    </ligand>
</feature>
<feature type="binding site" evidence="1">
    <location>
        <position position="153"/>
    </location>
    <ligand>
        <name>pyridoxal 5'-phosphate</name>
        <dbReference type="ChEBI" id="CHEBI:597326"/>
    </ligand>
</feature>
<feature type="binding site" evidence="1">
    <location>
        <position position="172"/>
    </location>
    <ligand>
        <name>pyridoxal 5'-phosphate</name>
        <dbReference type="ChEBI" id="CHEBI:597326"/>
    </ligand>
</feature>
<feature type="binding site" evidence="1">
    <location>
        <position position="195"/>
    </location>
    <ligand>
        <name>pyridoxal 5'-phosphate</name>
        <dbReference type="ChEBI" id="CHEBI:597326"/>
    </ligand>
</feature>
<feature type="binding site" evidence="1">
    <location>
        <begin position="237"/>
        <end position="238"/>
    </location>
    <ligand>
        <name>pyridoxal 5'-phosphate</name>
        <dbReference type="ChEBI" id="CHEBI:597326"/>
    </ligand>
</feature>
<feature type="modified residue" description="N6-(pyridoxal phosphate)lysine" evidence="1">
    <location>
        <position position="196"/>
    </location>
</feature>
<protein>
    <recommendedName>
        <fullName evidence="1">Phosphoserine aminotransferase</fullName>
        <ecNumber evidence="1">2.6.1.52</ecNumber>
    </recommendedName>
    <alternativeName>
        <fullName evidence="1">Phosphohydroxythreonine aminotransferase</fullName>
        <shortName evidence="1">PSAT</shortName>
    </alternativeName>
</protein>
<evidence type="ECO:0000255" key="1">
    <source>
        <dbReference type="HAMAP-Rule" id="MF_00160"/>
    </source>
</evidence>
<organism>
    <name type="scientific">Aliivibrio fischeri (strain ATCC 700601 / ES114)</name>
    <name type="common">Vibrio fischeri</name>
    <dbReference type="NCBI Taxonomy" id="312309"/>
    <lineage>
        <taxon>Bacteria</taxon>
        <taxon>Pseudomonadati</taxon>
        <taxon>Pseudomonadota</taxon>
        <taxon>Gammaproteobacteria</taxon>
        <taxon>Vibrionales</taxon>
        <taxon>Vibrionaceae</taxon>
        <taxon>Aliivibrio</taxon>
    </lineage>
</organism>
<sequence>MEKVFNFCAGPAMLPVDVLAQAQKELVNWNGLGTSVMEISHRSKEFIKVAEESEQDLRDLLAIPDNYKVLFCQGGARAQFAAVPLNLLGGNTKADYVDAGYWAQSAVEEAQKYCTPNVINTIIDVDGKKAVQPASEWALSDDAVYVHFCPNETIDGIEINDLPVTDKPIVADMSSTILSRKIDVSKYGVIYAGAQKNIGPAGLTIVIVRDDLLDLASQTLPSVLNYGVLADKESMFNTPPTYAWYLAGLVFKWLKSNGGIDAMETHNRKKAAVLYDYIDQSDFYRNDVHSDNRSLMNVPFQLANPELDTKFLELADEAGLKALKGHRVVGGMRASIYNAMPLEGVEALVQFMKEFEEKYV</sequence>
<keyword id="KW-0028">Amino-acid biosynthesis</keyword>
<keyword id="KW-0032">Aminotransferase</keyword>
<keyword id="KW-0963">Cytoplasm</keyword>
<keyword id="KW-0663">Pyridoxal phosphate</keyword>
<keyword id="KW-0664">Pyridoxine biosynthesis</keyword>
<keyword id="KW-1185">Reference proteome</keyword>
<keyword id="KW-0718">Serine biosynthesis</keyword>
<keyword id="KW-0808">Transferase</keyword>
<gene>
    <name evidence="1" type="primary">serC</name>
    <name type="ordered locus">VF_0899</name>
</gene>
<proteinExistence type="inferred from homology"/>